<comment type="function">
    <text evidence="1">Is involved in NO detoxification in an aerobic process, termed nitric oxide dioxygenase (NOD) reaction that utilizes O(2) and NAD(P)H to convert NO to nitrate, which protects the bacterium from various noxious nitrogen compounds. Therefore, plays a central role in the inducible response to nitrosative stress.</text>
</comment>
<comment type="catalytic activity">
    <reaction evidence="1">
        <text>2 nitric oxide + NADPH + 2 O2 = 2 nitrate + NADP(+) + H(+)</text>
        <dbReference type="Rhea" id="RHEA:19465"/>
        <dbReference type="ChEBI" id="CHEBI:15378"/>
        <dbReference type="ChEBI" id="CHEBI:15379"/>
        <dbReference type="ChEBI" id="CHEBI:16480"/>
        <dbReference type="ChEBI" id="CHEBI:17632"/>
        <dbReference type="ChEBI" id="CHEBI:57783"/>
        <dbReference type="ChEBI" id="CHEBI:58349"/>
        <dbReference type="EC" id="1.14.12.17"/>
    </reaction>
</comment>
<comment type="catalytic activity">
    <reaction evidence="1">
        <text>2 nitric oxide + NADH + 2 O2 = 2 nitrate + NAD(+) + H(+)</text>
        <dbReference type="Rhea" id="RHEA:19469"/>
        <dbReference type="ChEBI" id="CHEBI:15378"/>
        <dbReference type="ChEBI" id="CHEBI:15379"/>
        <dbReference type="ChEBI" id="CHEBI:16480"/>
        <dbReference type="ChEBI" id="CHEBI:17632"/>
        <dbReference type="ChEBI" id="CHEBI:57540"/>
        <dbReference type="ChEBI" id="CHEBI:57945"/>
        <dbReference type="EC" id="1.14.12.17"/>
    </reaction>
</comment>
<comment type="cofactor">
    <cofactor evidence="1">
        <name>heme b</name>
        <dbReference type="ChEBI" id="CHEBI:60344"/>
    </cofactor>
    <text evidence="1">Binds 1 heme b (iron(II)-protoporphyrin IX) group per subunit.</text>
</comment>
<comment type="cofactor">
    <cofactor evidence="1">
        <name>FAD</name>
        <dbReference type="ChEBI" id="CHEBI:57692"/>
    </cofactor>
    <text evidence="1">Binds 1 FAD per subunit.</text>
</comment>
<comment type="domain">
    <text>Consists of two distinct domains; an N-terminal heme-containing oxygen-binding domain and a C-terminal reductase domain with binding sites for FAD and NAD(P)H.</text>
</comment>
<comment type="similarity">
    <text evidence="1">Belongs to the globin family. Two-domain flavohemoproteins subfamily.</text>
</comment>
<comment type="similarity">
    <text evidence="1">In the C-terminal section; belongs to the flavoprotein pyridine nucleotide cytochrome reductase family.</text>
</comment>
<gene>
    <name evidence="1" type="primary">hmp</name>
    <name type="ordered locus">BC_1448</name>
</gene>
<feature type="chain" id="PRO_0000052421" description="Flavohemoprotein">
    <location>
        <begin position="1"/>
        <end position="402"/>
    </location>
</feature>
<feature type="domain" description="Globin" evidence="2">
    <location>
        <begin position="1"/>
        <end position="136"/>
    </location>
</feature>
<feature type="domain" description="FAD-binding FR-type" evidence="1">
    <location>
        <begin position="150"/>
        <end position="260"/>
    </location>
</feature>
<feature type="region of interest" description="Reductase">
    <location>
        <begin position="147"/>
        <end position="402"/>
    </location>
</feature>
<feature type="active site" description="Charge relay system" evidence="1">
    <location>
        <position position="95"/>
    </location>
</feature>
<feature type="active site" description="Charge relay system" evidence="1">
    <location>
        <position position="135"/>
    </location>
</feature>
<feature type="binding site" description="proximal binding residue" evidence="1">
    <location>
        <position position="85"/>
    </location>
    <ligand>
        <name>heme b</name>
        <dbReference type="ChEBI" id="CHEBI:60344"/>
    </ligand>
    <ligandPart>
        <name>Fe</name>
        <dbReference type="ChEBI" id="CHEBI:18248"/>
    </ligandPart>
</feature>
<feature type="binding site" evidence="1">
    <location>
        <position position="188"/>
    </location>
    <ligand>
        <name>FAD</name>
        <dbReference type="ChEBI" id="CHEBI:57692"/>
    </ligand>
</feature>
<feature type="binding site" evidence="1">
    <location>
        <begin position="204"/>
        <end position="207"/>
    </location>
    <ligand>
        <name>FAD</name>
        <dbReference type="ChEBI" id="CHEBI:57692"/>
    </ligand>
</feature>
<feature type="binding site" evidence="1">
    <location>
        <begin position="273"/>
        <end position="278"/>
    </location>
    <ligand>
        <name>NADP(+)</name>
        <dbReference type="ChEBI" id="CHEBI:58349"/>
    </ligand>
</feature>
<feature type="binding site" evidence="1">
    <location>
        <begin position="394"/>
        <end position="397"/>
    </location>
    <ligand>
        <name>FAD</name>
        <dbReference type="ChEBI" id="CHEBI:57692"/>
    </ligand>
</feature>
<feature type="site" description="Involved in heme-bound ligand stabilization and O-O bond activation" evidence="1">
    <location>
        <position position="29"/>
    </location>
</feature>
<feature type="site" description="Influences the redox potential of the prosthetic heme and FAD groups" evidence="1">
    <location>
        <position position="84"/>
    </location>
</feature>
<feature type="site" description="Influences the redox potential of the prosthetic heme and FAD groups" evidence="1">
    <location>
        <position position="393"/>
    </location>
</feature>
<sequence>MLSAKTIEIVKSTVPLLQEKGVEITTRFYQILFSEHPELLNIFNHTNQKKGRQQQALANAVYAAATYIDNLEAIIPVVKQIGHKHRSLGIKAEHYPIVGTCLLRAIKEVAGAPDEVLNAWGEAYGVIADAFISIEAEMYEEAAHKEGGWKDFRNFVIVKKVKESDVITSFYLKPEDGGKVSSFIPGQYVTIQINIEGETYTHNRQYSLSDAPGKEYYRISVKKEKGVDTPDGKVSNYLHGHVKEGDVLPVSAPAGDFVLNMDSTLPVVLISGGVGITPMMSMLNTLIEQDSKRNVYFVHAAINSNTHAMKEHVKAVENEYEQVKAYTCYSAPTEKDLEMKNFDKEGFIESEWLKTIIPTTEAEFYFCGPVAFMKHINAALTDLSVKQEHIHYEFFGPATSLQ</sequence>
<dbReference type="EC" id="1.14.12.17" evidence="1"/>
<dbReference type="EMBL" id="AE016877">
    <property type="protein sequence ID" value="AAP08429.1"/>
    <property type="molecule type" value="Genomic_DNA"/>
</dbReference>
<dbReference type="RefSeq" id="NP_831228.1">
    <property type="nucleotide sequence ID" value="NC_004722.1"/>
</dbReference>
<dbReference type="SMR" id="Q81FW4"/>
<dbReference type="STRING" id="226900.BC_1448"/>
<dbReference type="KEGG" id="bce:BC1448"/>
<dbReference type="PATRIC" id="fig|226900.8.peg.1425"/>
<dbReference type="HOGENOM" id="CLU_003827_12_0_9"/>
<dbReference type="OrthoDB" id="9801223at2"/>
<dbReference type="Proteomes" id="UP000001417">
    <property type="component" value="Chromosome"/>
</dbReference>
<dbReference type="GO" id="GO:0005737">
    <property type="term" value="C:cytoplasm"/>
    <property type="evidence" value="ECO:0000318"/>
    <property type="project" value="GO_Central"/>
</dbReference>
<dbReference type="GO" id="GO:0071949">
    <property type="term" value="F:FAD binding"/>
    <property type="evidence" value="ECO:0000318"/>
    <property type="project" value="GO_Central"/>
</dbReference>
<dbReference type="GO" id="GO:0020037">
    <property type="term" value="F:heme binding"/>
    <property type="evidence" value="ECO:0007669"/>
    <property type="project" value="InterPro"/>
</dbReference>
<dbReference type="GO" id="GO:0046872">
    <property type="term" value="F:metal ion binding"/>
    <property type="evidence" value="ECO:0007669"/>
    <property type="project" value="UniProtKB-KW"/>
</dbReference>
<dbReference type="GO" id="GO:0008941">
    <property type="term" value="F:nitric oxide dioxygenase NAD(P)H activity"/>
    <property type="evidence" value="ECO:0000318"/>
    <property type="project" value="GO_Central"/>
</dbReference>
<dbReference type="GO" id="GO:0019825">
    <property type="term" value="F:oxygen binding"/>
    <property type="evidence" value="ECO:0007669"/>
    <property type="project" value="InterPro"/>
</dbReference>
<dbReference type="GO" id="GO:0005344">
    <property type="term" value="F:oxygen carrier activity"/>
    <property type="evidence" value="ECO:0007669"/>
    <property type="project" value="UniProtKB-UniRule"/>
</dbReference>
<dbReference type="GO" id="GO:0071500">
    <property type="term" value="P:cellular response to nitrosative stress"/>
    <property type="evidence" value="ECO:0000318"/>
    <property type="project" value="GO_Central"/>
</dbReference>
<dbReference type="GO" id="GO:0046210">
    <property type="term" value="P:nitric oxide catabolic process"/>
    <property type="evidence" value="ECO:0000318"/>
    <property type="project" value="GO_Central"/>
</dbReference>
<dbReference type="GO" id="GO:0009636">
    <property type="term" value="P:response to toxic substance"/>
    <property type="evidence" value="ECO:0007669"/>
    <property type="project" value="UniProtKB-KW"/>
</dbReference>
<dbReference type="CDD" id="cd06184">
    <property type="entry name" value="flavohem_like_fad_nad_binding"/>
    <property type="match status" value="1"/>
</dbReference>
<dbReference type="CDD" id="cd14777">
    <property type="entry name" value="Yhb1-globin-like"/>
    <property type="match status" value="1"/>
</dbReference>
<dbReference type="FunFam" id="1.10.490.10:FF:000003">
    <property type="entry name" value="Flavohemoprotein"/>
    <property type="match status" value="1"/>
</dbReference>
<dbReference type="FunFam" id="2.40.30.10:FF:000034">
    <property type="entry name" value="Flavohemoprotein"/>
    <property type="match status" value="1"/>
</dbReference>
<dbReference type="FunFam" id="3.40.50.80:FF:000010">
    <property type="entry name" value="Flavohemoprotein"/>
    <property type="match status" value="1"/>
</dbReference>
<dbReference type="Gene3D" id="1.10.490.10">
    <property type="entry name" value="Globins"/>
    <property type="match status" value="1"/>
</dbReference>
<dbReference type="Gene3D" id="3.40.50.80">
    <property type="entry name" value="Nucleotide-binding domain of ferredoxin-NADP reductase (FNR) module"/>
    <property type="match status" value="1"/>
</dbReference>
<dbReference type="Gene3D" id="2.40.30.10">
    <property type="entry name" value="Translation factors"/>
    <property type="match status" value="1"/>
</dbReference>
<dbReference type="HAMAP" id="MF_01252">
    <property type="entry name" value="Hmp"/>
    <property type="match status" value="1"/>
</dbReference>
<dbReference type="InterPro" id="IPR008333">
    <property type="entry name" value="Cbr1-like_FAD-bd_dom"/>
</dbReference>
<dbReference type="InterPro" id="IPR017927">
    <property type="entry name" value="FAD-bd_FR_type"/>
</dbReference>
<dbReference type="InterPro" id="IPR039261">
    <property type="entry name" value="FNR_nucleotide-bd"/>
</dbReference>
<dbReference type="InterPro" id="IPR000971">
    <property type="entry name" value="Globin"/>
</dbReference>
<dbReference type="InterPro" id="IPR009050">
    <property type="entry name" value="Globin-like_sf"/>
</dbReference>
<dbReference type="InterPro" id="IPR012292">
    <property type="entry name" value="Globin/Proto"/>
</dbReference>
<dbReference type="InterPro" id="IPR023950">
    <property type="entry name" value="Hmp"/>
</dbReference>
<dbReference type="InterPro" id="IPR001433">
    <property type="entry name" value="OxRdtase_FAD/NAD-bd"/>
</dbReference>
<dbReference type="InterPro" id="IPR017938">
    <property type="entry name" value="Riboflavin_synthase-like_b-brl"/>
</dbReference>
<dbReference type="NCBIfam" id="NF009805">
    <property type="entry name" value="PRK13289.1"/>
    <property type="match status" value="1"/>
</dbReference>
<dbReference type="PANTHER" id="PTHR43396">
    <property type="entry name" value="FLAVOHEMOPROTEIN"/>
    <property type="match status" value="1"/>
</dbReference>
<dbReference type="PANTHER" id="PTHR43396:SF3">
    <property type="entry name" value="FLAVOHEMOPROTEIN"/>
    <property type="match status" value="1"/>
</dbReference>
<dbReference type="Pfam" id="PF00970">
    <property type="entry name" value="FAD_binding_6"/>
    <property type="match status" value="1"/>
</dbReference>
<dbReference type="Pfam" id="PF00042">
    <property type="entry name" value="Globin"/>
    <property type="match status" value="1"/>
</dbReference>
<dbReference type="Pfam" id="PF00175">
    <property type="entry name" value="NAD_binding_1"/>
    <property type="match status" value="1"/>
</dbReference>
<dbReference type="PRINTS" id="PR00410">
    <property type="entry name" value="PHEHYDRXLASE"/>
</dbReference>
<dbReference type="SUPFAM" id="SSF52343">
    <property type="entry name" value="Ferredoxin reductase-like, C-terminal NADP-linked domain"/>
    <property type="match status" value="1"/>
</dbReference>
<dbReference type="SUPFAM" id="SSF46458">
    <property type="entry name" value="Globin-like"/>
    <property type="match status" value="1"/>
</dbReference>
<dbReference type="SUPFAM" id="SSF63380">
    <property type="entry name" value="Riboflavin synthase domain-like"/>
    <property type="match status" value="1"/>
</dbReference>
<dbReference type="PROSITE" id="PS51384">
    <property type="entry name" value="FAD_FR"/>
    <property type="match status" value="1"/>
</dbReference>
<dbReference type="PROSITE" id="PS01033">
    <property type="entry name" value="GLOBIN"/>
    <property type="match status" value="1"/>
</dbReference>
<protein>
    <recommendedName>
        <fullName evidence="1">Flavohemoprotein</fullName>
    </recommendedName>
    <alternativeName>
        <fullName evidence="1">Flavohemoglobin</fullName>
    </alternativeName>
    <alternativeName>
        <fullName evidence="1">Hemoglobin-like protein</fullName>
    </alternativeName>
    <alternativeName>
        <fullName evidence="1">Nitric oxide dioxygenase</fullName>
        <shortName evidence="1">NO oxygenase</shortName>
        <shortName evidence="1">NOD</shortName>
        <ecNumber evidence="1">1.14.12.17</ecNumber>
    </alternativeName>
</protein>
<accession>Q81FW4</accession>
<organism>
    <name type="scientific">Bacillus cereus (strain ATCC 14579 / DSM 31 / CCUG 7414 / JCM 2152 / NBRC 15305 / NCIMB 9373 / NCTC 2599 / NRRL B-3711)</name>
    <dbReference type="NCBI Taxonomy" id="226900"/>
    <lineage>
        <taxon>Bacteria</taxon>
        <taxon>Bacillati</taxon>
        <taxon>Bacillota</taxon>
        <taxon>Bacilli</taxon>
        <taxon>Bacillales</taxon>
        <taxon>Bacillaceae</taxon>
        <taxon>Bacillus</taxon>
        <taxon>Bacillus cereus group</taxon>
    </lineage>
</organism>
<evidence type="ECO:0000255" key="1">
    <source>
        <dbReference type="HAMAP-Rule" id="MF_01252"/>
    </source>
</evidence>
<evidence type="ECO:0000255" key="2">
    <source>
        <dbReference type="PROSITE-ProRule" id="PRU00238"/>
    </source>
</evidence>
<keyword id="KW-0216">Detoxification</keyword>
<keyword id="KW-0274">FAD</keyword>
<keyword id="KW-0285">Flavoprotein</keyword>
<keyword id="KW-0349">Heme</keyword>
<keyword id="KW-0408">Iron</keyword>
<keyword id="KW-0479">Metal-binding</keyword>
<keyword id="KW-0520">NAD</keyword>
<keyword id="KW-0521">NADP</keyword>
<keyword id="KW-0560">Oxidoreductase</keyword>
<keyword id="KW-0561">Oxygen transport</keyword>
<keyword id="KW-1185">Reference proteome</keyword>
<keyword id="KW-0813">Transport</keyword>
<name>HMP_BACCR</name>
<reference key="1">
    <citation type="journal article" date="2003" name="Nature">
        <title>Genome sequence of Bacillus cereus and comparative analysis with Bacillus anthracis.</title>
        <authorList>
            <person name="Ivanova N."/>
            <person name="Sorokin A."/>
            <person name="Anderson I."/>
            <person name="Galleron N."/>
            <person name="Candelon B."/>
            <person name="Kapatral V."/>
            <person name="Bhattacharyya A."/>
            <person name="Reznik G."/>
            <person name="Mikhailova N."/>
            <person name="Lapidus A."/>
            <person name="Chu L."/>
            <person name="Mazur M."/>
            <person name="Goltsman E."/>
            <person name="Larsen N."/>
            <person name="D'Souza M."/>
            <person name="Walunas T."/>
            <person name="Grechkin Y."/>
            <person name="Pusch G."/>
            <person name="Haselkorn R."/>
            <person name="Fonstein M."/>
            <person name="Ehrlich S.D."/>
            <person name="Overbeek R."/>
            <person name="Kyrpides N.C."/>
        </authorList>
    </citation>
    <scope>NUCLEOTIDE SEQUENCE [LARGE SCALE GENOMIC DNA]</scope>
    <source>
        <strain>ATCC 14579 / DSM 31 / CCUG 7414 / JCM 2152 / NBRC 15305 / NCIMB 9373 / NCTC 2599 / NRRL B-3711</strain>
    </source>
</reference>
<proteinExistence type="inferred from homology"/>